<gene>
    <name evidence="4" type="primary">dntAc</name>
</gene>
<keyword id="KW-0001">2Fe-2S</keyword>
<keyword id="KW-0058">Aromatic hydrocarbons catabolism</keyword>
<keyword id="KW-0223">Dioxygenase</keyword>
<keyword id="KW-0408">Iron</keyword>
<keyword id="KW-0411">Iron-sulfur</keyword>
<keyword id="KW-0479">Metal-binding</keyword>
<keyword id="KW-0520">NAD</keyword>
<keyword id="KW-0560">Oxidoreductase</keyword>
<dbReference type="EC" id="1.14.12.24" evidence="6"/>
<dbReference type="EMBL" id="U62430">
    <property type="protein sequence ID" value="AAB09766.1"/>
    <property type="molecule type" value="Genomic_DNA"/>
</dbReference>
<dbReference type="SMR" id="Q45695"/>
<dbReference type="KEGG" id="ag:AAB09766"/>
<dbReference type="BioCyc" id="MetaCyc:MONOMER-13335"/>
<dbReference type="GO" id="GO:0051537">
    <property type="term" value="F:2 iron, 2 sulfur cluster binding"/>
    <property type="evidence" value="ECO:0000250"/>
    <property type="project" value="UniProtKB"/>
</dbReference>
<dbReference type="GO" id="GO:0005506">
    <property type="term" value="F:iron ion binding"/>
    <property type="evidence" value="ECO:0007669"/>
    <property type="project" value="InterPro"/>
</dbReference>
<dbReference type="GO" id="GO:0018625">
    <property type="term" value="F:naphthalene 1,2-dioxygenase activity"/>
    <property type="evidence" value="ECO:0000250"/>
    <property type="project" value="UniProtKB"/>
</dbReference>
<dbReference type="GO" id="GO:0016708">
    <property type="term" value="F:oxidoreductase activity, acting on paired donors, with incorporation or reduction of molecular oxygen, NAD(P)H as one donor, and incorporation of two atoms of oxygen into one donor"/>
    <property type="evidence" value="ECO:0000304"/>
    <property type="project" value="UniProtKB"/>
</dbReference>
<dbReference type="GO" id="GO:0009056">
    <property type="term" value="P:catabolic process"/>
    <property type="evidence" value="ECO:0007669"/>
    <property type="project" value="UniProtKB-KW"/>
</dbReference>
<dbReference type="CDD" id="cd08881">
    <property type="entry name" value="RHO_alpha_C_NDO-like"/>
    <property type="match status" value="1"/>
</dbReference>
<dbReference type="FunFam" id="2.102.10.10:FF:000004">
    <property type="entry name" value="3-phenylpropionate/cinnamic acid dioxygenase subunit alpha"/>
    <property type="match status" value="1"/>
</dbReference>
<dbReference type="FunFam" id="3.90.380.10:FF:000007">
    <property type="entry name" value="Naphthalene 1,2-dioxygenase system, large oxygenase component"/>
    <property type="match status" value="1"/>
</dbReference>
<dbReference type="Gene3D" id="3.90.380.10">
    <property type="entry name" value="Naphthalene 1,2-dioxygenase Alpha Subunit, Chain A, domain 1"/>
    <property type="match status" value="1"/>
</dbReference>
<dbReference type="Gene3D" id="2.102.10.10">
    <property type="entry name" value="Rieske [2Fe-2S] iron-sulphur domain"/>
    <property type="match status" value="1"/>
</dbReference>
<dbReference type="InterPro" id="IPR043266">
    <property type="entry name" value="RHO_NdoB-like_C"/>
</dbReference>
<dbReference type="InterPro" id="IPR017941">
    <property type="entry name" value="Rieske_2Fe-2S"/>
</dbReference>
<dbReference type="InterPro" id="IPR036922">
    <property type="entry name" value="Rieske_2Fe-2S_sf"/>
</dbReference>
<dbReference type="InterPro" id="IPR015881">
    <property type="entry name" value="Ring-hydroxy_dOase_2Fe2S_BS"/>
</dbReference>
<dbReference type="InterPro" id="IPR015879">
    <property type="entry name" value="Ring_hydroxy_dOase_asu_C_dom"/>
</dbReference>
<dbReference type="InterPro" id="IPR001663">
    <property type="entry name" value="Rng_hydr_dOase-A"/>
</dbReference>
<dbReference type="PANTHER" id="PTHR43756:SF1">
    <property type="entry name" value="3-PHENYLPROPIONATE_CINNAMIC ACID DIOXYGENASE SUBUNIT ALPHA"/>
    <property type="match status" value="1"/>
</dbReference>
<dbReference type="PANTHER" id="PTHR43756">
    <property type="entry name" value="CHOLINE MONOOXYGENASE, CHLOROPLASTIC"/>
    <property type="match status" value="1"/>
</dbReference>
<dbReference type="Pfam" id="PF00355">
    <property type="entry name" value="Rieske"/>
    <property type="match status" value="1"/>
</dbReference>
<dbReference type="Pfam" id="PF00848">
    <property type="entry name" value="Ring_hydroxyl_A"/>
    <property type="match status" value="1"/>
</dbReference>
<dbReference type="PRINTS" id="PR00090">
    <property type="entry name" value="RNGDIOXGNASE"/>
</dbReference>
<dbReference type="SUPFAM" id="SSF55961">
    <property type="entry name" value="Bet v1-like"/>
    <property type="match status" value="1"/>
</dbReference>
<dbReference type="SUPFAM" id="SSF50022">
    <property type="entry name" value="ISP domain"/>
    <property type="match status" value="1"/>
</dbReference>
<dbReference type="PROSITE" id="PS51296">
    <property type="entry name" value="RIESKE"/>
    <property type="match status" value="1"/>
</dbReference>
<dbReference type="PROSITE" id="PS00570">
    <property type="entry name" value="RING_HYDROXYL_ALPHA"/>
    <property type="match status" value="1"/>
</dbReference>
<evidence type="ECO:0000250" key="1">
    <source>
        <dbReference type="UniProtKB" id="P0A110"/>
    </source>
</evidence>
<evidence type="ECO:0000255" key="2">
    <source>
        <dbReference type="PROSITE-ProRule" id="PRU00628"/>
    </source>
</evidence>
<evidence type="ECO:0000269" key="3">
    <source>
    </source>
</evidence>
<evidence type="ECO:0000303" key="4">
    <source>
    </source>
</evidence>
<evidence type="ECO:0000305" key="5"/>
<evidence type="ECO:0000305" key="6">
    <source>
    </source>
</evidence>
<evidence type="ECO:0000312" key="7">
    <source>
        <dbReference type="EMBL" id="AAB09766.1"/>
    </source>
</evidence>
<name>DNTAC_BURSR</name>
<protein>
    <recommendedName>
        <fullName evidence="5">2,4-dinitrotoluene dioxygenase system, large oxygenase component</fullName>
        <ecNumber evidence="6">1.14.12.24</ecNumber>
    </recommendedName>
    <alternativeName>
        <fullName evidence="4">2,4-dinitrotoluene dioxygenase ISP alpha</fullName>
    </alternativeName>
    <alternativeName>
        <fullName evidence="4">2,4-dinitrotoluene dioxygenase subunit alpha</fullName>
    </alternativeName>
</protein>
<comment type="function">
    <text evidence="3">Component of the 2,4-dinitrotoluene dioxygenase (DNTDO) multicomponent enzyme system which catalyzes the incorporation of both atoms of molecular oxygen into 2,4-dinitrotoluene (DNT) to form 4-methyl-5-nitrocatechol (MNC) and nitrite. The alpha subunit has a catalytic role in the holoenzyme. Also able to convert naphthalene to cis-(1R,2S)-dihydroxy-1,2-dihydronaphthalene.</text>
</comment>
<comment type="catalytic activity">
    <reaction evidence="6">
        <text>2,4-dinitrotoluene + NADH + O2 = 4-methyl-5-nitrocatechol + nitrite + NAD(+)</text>
        <dbReference type="Rhea" id="RHEA:46760"/>
        <dbReference type="ChEBI" id="CHEBI:920"/>
        <dbReference type="ChEBI" id="CHEBI:15379"/>
        <dbReference type="ChEBI" id="CHEBI:16301"/>
        <dbReference type="ChEBI" id="CHEBI:57540"/>
        <dbReference type="ChEBI" id="CHEBI:57945"/>
        <dbReference type="ChEBI" id="CHEBI:81666"/>
        <dbReference type="EC" id="1.14.12.24"/>
    </reaction>
</comment>
<comment type="cofactor">
    <cofactor evidence="1 2">
        <name>[2Fe-2S] cluster</name>
        <dbReference type="ChEBI" id="CHEBI:190135"/>
    </cofactor>
    <text evidence="1 2">Binds 1 [2Fe-2S] cluster per subunit.</text>
</comment>
<comment type="cofactor">
    <cofactor evidence="1">
        <name>Fe(2+)</name>
        <dbReference type="ChEBI" id="CHEBI:29033"/>
    </cofactor>
    <text evidence="1">Binds 1 Fe(2+) ion per subunit.</text>
</comment>
<comment type="subunit">
    <text evidence="6">The 2,4-dinitrotoluene dioxygenase (DNTDO) multicomponent enzyme system is composed of an electron transfer component and a dioxygenase component (iron sulfur protein (ISP)). The electron transfer component is composed of a ferredoxin reductase (DntAa) and a ferredoxin (DntAb), and the dioxygenase component is formed of a large alpha subunit (DntAc) and a small beta subunit (DntAd).</text>
</comment>
<comment type="similarity">
    <text evidence="5">Belongs to the bacterial ring-hydroxylating dioxygenase alpha subunit family.</text>
</comment>
<feature type="chain" id="PRO_0000442188" description="2,4-dinitrotoluene dioxygenase system, large oxygenase component">
    <location>
        <begin position="1"/>
        <end position="451"/>
    </location>
</feature>
<feature type="domain" description="Rieske" evidence="2">
    <location>
        <begin position="42"/>
        <end position="126"/>
    </location>
</feature>
<feature type="binding site" evidence="1 2">
    <location>
        <position position="84"/>
    </location>
    <ligand>
        <name>[2Fe-2S] cluster</name>
        <dbReference type="ChEBI" id="CHEBI:190135"/>
    </ligand>
</feature>
<feature type="binding site" evidence="1 2">
    <location>
        <position position="86"/>
    </location>
    <ligand>
        <name>[2Fe-2S] cluster</name>
        <dbReference type="ChEBI" id="CHEBI:190135"/>
    </ligand>
</feature>
<feature type="binding site" evidence="1 2">
    <location>
        <position position="104"/>
    </location>
    <ligand>
        <name>[2Fe-2S] cluster</name>
        <dbReference type="ChEBI" id="CHEBI:190135"/>
    </ligand>
</feature>
<feature type="binding site" evidence="1 2">
    <location>
        <position position="107"/>
    </location>
    <ligand>
        <name>[2Fe-2S] cluster</name>
        <dbReference type="ChEBI" id="CHEBI:190135"/>
    </ligand>
</feature>
<feature type="binding site" evidence="1">
    <location>
        <position position="211"/>
    </location>
    <ligand>
        <name>Fe cation</name>
        <dbReference type="ChEBI" id="CHEBI:24875"/>
    </ligand>
</feature>
<feature type="binding site" evidence="1">
    <location>
        <position position="216"/>
    </location>
    <ligand>
        <name>Fe cation</name>
        <dbReference type="ChEBI" id="CHEBI:24875"/>
    </ligand>
</feature>
<feature type="binding site" evidence="1">
    <location>
        <position position="365"/>
    </location>
    <ligand>
        <name>Fe cation</name>
        <dbReference type="ChEBI" id="CHEBI:24875"/>
    </ligand>
</feature>
<proteinExistence type="evidence at protein level"/>
<organism>
    <name type="scientific">Burkholderia sp. (strain RASC)</name>
    <dbReference type="NCBI Taxonomy" id="69003"/>
    <lineage>
        <taxon>Bacteria</taxon>
        <taxon>Pseudomonadati</taxon>
        <taxon>Pseudomonadota</taxon>
        <taxon>Betaproteobacteria</taxon>
        <taxon>Burkholderiales</taxon>
        <taxon>Burkholderiaceae</taxon>
        <taxon>Burkholderia</taxon>
    </lineage>
</organism>
<sequence length="451" mass="49827">MRQAIMSYQNLVSEAGLTQKHLIYGDKELFQHELKTIFARNWLFLTHDSLIPSPGDYVKAKMGVDEVIVSRQNDGSVRAFLNVCRHRGKTIVDAEAGNAKGFVCGYHGWGYGSNGELQSVPFEKELYGDAIKKKCLGLKEVPRIESFHGFIYGCFDAEAPPLIDYLGDVAWYLEPTFKHSGGLELVGPPAKVVVKGNWKVFAENFVGDIYHIGWTHASILRAGQAIFAPLAGNAMLPPEGTGLQATTKYGSGIGVSLDAYSGVQSADLVPEMMAFGGAKQEKLAKEIGDVRARIYRSQVNGTVFPNNCFLTGAGVFKVFNPIDENTTEAWTYAIVEKDMPEDLKRRLADAAQRSTGPAGYWESDDNDNMVLSQNAKKYQSSNSDLIADLGFGKDVYGDECYPGVVSKSAFSETNHRGFYRAYQAHISSSNWAEFENTSRNWHTELTKTTDR</sequence>
<accession>Q45695</accession>
<reference key="1">
    <citation type="journal article" date="1996" name="J. Bacteriol.">
        <title>2,4-Dinitrotoluene dioxygenase from Burkholderia sp. strain DNT: similarity to naphthalene dioxygenase.</title>
        <authorList>
            <person name="Suen W.C."/>
            <person name="Haigler B.E."/>
            <person name="Spain J.C."/>
        </authorList>
    </citation>
    <scope>NUCLEOTIDE SEQUENCE [GENOMIC DNA]</scope>
    <scope>FUNCTION</scope>
    <scope>CATALYTIC ACTIVITY</scope>
    <scope>SUBSTRATE SPECIFICITY</scope>
    <scope>SUBUNIT</scope>
    <source>
        <strain evidence="7">DNT</strain>
    </source>
</reference>